<accession>A0LNX9</accession>
<organism>
    <name type="scientific">Syntrophobacter fumaroxidans (strain DSM 10017 / MPOB)</name>
    <dbReference type="NCBI Taxonomy" id="335543"/>
    <lineage>
        <taxon>Bacteria</taxon>
        <taxon>Pseudomonadati</taxon>
        <taxon>Thermodesulfobacteriota</taxon>
        <taxon>Syntrophobacteria</taxon>
        <taxon>Syntrophobacterales</taxon>
        <taxon>Syntrophobacteraceae</taxon>
        <taxon>Syntrophobacter</taxon>
    </lineage>
</organism>
<reference key="1">
    <citation type="submission" date="2006-10" db="EMBL/GenBank/DDBJ databases">
        <title>Complete sequence of Syntrophobacter fumaroxidans MPOB.</title>
        <authorList>
            <consortium name="US DOE Joint Genome Institute"/>
            <person name="Copeland A."/>
            <person name="Lucas S."/>
            <person name="Lapidus A."/>
            <person name="Barry K."/>
            <person name="Detter J.C."/>
            <person name="Glavina del Rio T."/>
            <person name="Hammon N."/>
            <person name="Israni S."/>
            <person name="Pitluck S."/>
            <person name="Goltsman E.G."/>
            <person name="Martinez M."/>
            <person name="Schmutz J."/>
            <person name="Larimer F."/>
            <person name="Land M."/>
            <person name="Hauser L."/>
            <person name="Kyrpides N."/>
            <person name="Kim E."/>
            <person name="Boone D.R."/>
            <person name="Brockman F."/>
            <person name="Culley D."/>
            <person name="Ferry J."/>
            <person name="Gunsalus R."/>
            <person name="McInerney M.J."/>
            <person name="Morrison M."/>
            <person name="Plugge C."/>
            <person name="Rohlin L."/>
            <person name="Scholten J."/>
            <person name="Sieber J."/>
            <person name="Stams A.J.M."/>
            <person name="Worm P."/>
            <person name="Henstra A.M."/>
            <person name="Richardson P."/>
        </authorList>
    </citation>
    <scope>NUCLEOTIDE SEQUENCE [LARGE SCALE GENOMIC DNA]</scope>
    <source>
        <strain>DSM 10017 / MPOB</strain>
    </source>
</reference>
<feature type="chain" id="PRO_1000066704" description="Acyl carrier protein">
    <location>
        <begin position="1"/>
        <end position="81"/>
    </location>
</feature>
<feature type="domain" description="Carrier" evidence="2">
    <location>
        <begin position="1"/>
        <end position="79"/>
    </location>
</feature>
<feature type="modified residue" description="O-(pantetheine 4'-phosphoryl)serine" evidence="2">
    <location>
        <position position="39"/>
    </location>
</feature>
<sequence>MDVAAMQVKIVDIIANQLGVDKEIITPEANVVDDLGADSLDVVELVMALEEAFDVEIPDEDAESIRTVKDIFDYLAKNKAA</sequence>
<protein>
    <recommendedName>
        <fullName evidence="1">Acyl carrier protein</fullName>
        <shortName evidence="1">ACP</shortName>
    </recommendedName>
</protein>
<comment type="function">
    <text evidence="1">Carrier of the growing fatty acid chain in fatty acid biosynthesis.</text>
</comment>
<comment type="pathway">
    <text evidence="1">Lipid metabolism; fatty acid biosynthesis.</text>
</comment>
<comment type="subcellular location">
    <subcellularLocation>
        <location evidence="1">Cytoplasm</location>
    </subcellularLocation>
</comment>
<comment type="PTM">
    <text evidence="1">4'-phosphopantetheine is transferred from CoA to a specific serine of apo-ACP by AcpS. This modification is essential for activity because fatty acids are bound in thioester linkage to the sulfhydryl of the prosthetic group.</text>
</comment>
<comment type="similarity">
    <text evidence="1">Belongs to the acyl carrier protein (ACP) family.</text>
</comment>
<evidence type="ECO:0000255" key="1">
    <source>
        <dbReference type="HAMAP-Rule" id="MF_01217"/>
    </source>
</evidence>
<evidence type="ECO:0000255" key="2">
    <source>
        <dbReference type="PROSITE-ProRule" id="PRU00258"/>
    </source>
</evidence>
<dbReference type="EMBL" id="CP000478">
    <property type="protein sequence ID" value="ABK19131.1"/>
    <property type="molecule type" value="Genomic_DNA"/>
</dbReference>
<dbReference type="RefSeq" id="WP_011700256.1">
    <property type="nucleotide sequence ID" value="NC_008554.1"/>
</dbReference>
<dbReference type="SMR" id="A0LNX9"/>
<dbReference type="FunCoup" id="A0LNX9">
    <property type="interactions" value="546"/>
</dbReference>
<dbReference type="STRING" id="335543.Sfum_3460"/>
<dbReference type="KEGG" id="sfu:Sfum_3460"/>
<dbReference type="eggNOG" id="COG0236">
    <property type="taxonomic scope" value="Bacteria"/>
</dbReference>
<dbReference type="HOGENOM" id="CLU_108696_5_1_7"/>
<dbReference type="InParanoid" id="A0LNX9"/>
<dbReference type="OrthoDB" id="9804551at2"/>
<dbReference type="UniPathway" id="UPA00094"/>
<dbReference type="Proteomes" id="UP000001784">
    <property type="component" value="Chromosome"/>
</dbReference>
<dbReference type="GO" id="GO:0005829">
    <property type="term" value="C:cytosol"/>
    <property type="evidence" value="ECO:0007669"/>
    <property type="project" value="TreeGrafter"/>
</dbReference>
<dbReference type="GO" id="GO:0016020">
    <property type="term" value="C:membrane"/>
    <property type="evidence" value="ECO:0007669"/>
    <property type="project" value="GOC"/>
</dbReference>
<dbReference type="GO" id="GO:0000035">
    <property type="term" value="F:acyl binding"/>
    <property type="evidence" value="ECO:0007669"/>
    <property type="project" value="TreeGrafter"/>
</dbReference>
<dbReference type="GO" id="GO:0000036">
    <property type="term" value="F:acyl carrier activity"/>
    <property type="evidence" value="ECO:0007669"/>
    <property type="project" value="UniProtKB-UniRule"/>
</dbReference>
<dbReference type="GO" id="GO:0031177">
    <property type="term" value="F:phosphopantetheine binding"/>
    <property type="evidence" value="ECO:0007669"/>
    <property type="project" value="InterPro"/>
</dbReference>
<dbReference type="GO" id="GO:0009245">
    <property type="term" value="P:lipid A biosynthetic process"/>
    <property type="evidence" value="ECO:0007669"/>
    <property type="project" value="TreeGrafter"/>
</dbReference>
<dbReference type="Gene3D" id="1.10.1200.10">
    <property type="entry name" value="ACP-like"/>
    <property type="match status" value="1"/>
</dbReference>
<dbReference type="HAMAP" id="MF_01217">
    <property type="entry name" value="Acyl_carrier"/>
    <property type="match status" value="1"/>
</dbReference>
<dbReference type="InterPro" id="IPR003231">
    <property type="entry name" value="ACP"/>
</dbReference>
<dbReference type="InterPro" id="IPR036736">
    <property type="entry name" value="ACP-like_sf"/>
</dbReference>
<dbReference type="InterPro" id="IPR020806">
    <property type="entry name" value="PKS_PP-bd"/>
</dbReference>
<dbReference type="InterPro" id="IPR009081">
    <property type="entry name" value="PP-bd_ACP"/>
</dbReference>
<dbReference type="InterPro" id="IPR006162">
    <property type="entry name" value="Ppantetheine_attach_site"/>
</dbReference>
<dbReference type="NCBIfam" id="TIGR00517">
    <property type="entry name" value="acyl_carrier"/>
    <property type="match status" value="1"/>
</dbReference>
<dbReference type="NCBIfam" id="NF002148">
    <property type="entry name" value="PRK00982.1-2"/>
    <property type="match status" value="1"/>
</dbReference>
<dbReference type="NCBIfam" id="NF002150">
    <property type="entry name" value="PRK00982.1-4"/>
    <property type="match status" value="1"/>
</dbReference>
<dbReference type="PANTHER" id="PTHR20863">
    <property type="entry name" value="ACYL CARRIER PROTEIN"/>
    <property type="match status" value="1"/>
</dbReference>
<dbReference type="PANTHER" id="PTHR20863:SF76">
    <property type="entry name" value="CARRIER DOMAIN-CONTAINING PROTEIN"/>
    <property type="match status" value="1"/>
</dbReference>
<dbReference type="Pfam" id="PF00550">
    <property type="entry name" value="PP-binding"/>
    <property type="match status" value="1"/>
</dbReference>
<dbReference type="SMART" id="SM00823">
    <property type="entry name" value="PKS_PP"/>
    <property type="match status" value="1"/>
</dbReference>
<dbReference type="SUPFAM" id="SSF47336">
    <property type="entry name" value="ACP-like"/>
    <property type="match status" value="1"/>
</dbReference>
<dbReference type="PROSITE" id="PS50075">
    <property type="entry name" value="CARRIER"/>
    <property type="match status" value="1"/>
</dbReference>
<dbReference type="PROSITE" id="PS00012">
    <property type="entry name" value="PHOSPHOPANTETHEINE"/>
    <property type="match status" value="1"/>
</dbReference>
<proteinExistence type="inferred from homology"/>
<keyword id="KW-0963">Cytoplasm</keyword>
<keyword id="KW-0275">Fatty acid biosynthesis</keyword>
<keyword id="KW-0276">Fatty acid metabolism</keyword>
<keyword id="KW-0444">Lipid biosynthesis</keyword>
<keyword id="KW-0443">Lipid metabolism</keyword>
<keyword id="KW-0596">Phosphopantetheine</keyword>
<keyword id="KW-0597">Phosphoprotein</keyword>
<keyword id="KW-1185">Reference proteome</keyword>
<name>ACP_SYNFM</name>
<gene>
    <name evidence="1" type="primary">acpP</name>
    <name type="ordered locus">Sfum_3460</name>
</gene>